<sequence length="468" mass="52993">MSSSLWLQCLQRLQEELPSAEFSMWVRPLQAELNDNTLTLFAPNRFVLDWVRDKYLNSINSLLNEFCGGDIPTLRFEVGSKPISAPPRPQRTAADVAAATSAPAQMQARQSLHKPWESRGPEPVDDLNHRSNVNPKHKFTNFVEGKSNQLGLAAARQVSDNPGTAYNPLFLYGGTGLGKTHLLQAVGNAILERKPNAKVVYMHSERFVQDMVKALQNNAIEEFKCYYRSVDALLIDDIQFFANKERSQEEFFHTFNALLEGNQQIILTSDRYPKEINGVEDRLKSRFGWGLTVAIEPPELETRVAILMKKAEDHQIHLADEVAFFIAKRLRSNVRELEGALNRVVANANFTGRAITIDFVREALRDLLALQEKLVTIDNIQKTVAEYYKIKMADLLSKRRSRSVARPRQLAMALSKELTNHSLPEIGDAFGGRDHTTVLHACRKIAQLREESHDIKEDYSNLIRTLSS</sequence>
<dbReference type="EMBL" id="FM178379">
    <property type="protein sequence ID" value="CAQ77694.1"/>
    <property type="molecule type" value="Genomic_DNA"/>
</dbReference>
<dbReference type="RefSeq" id="WP_012548919.1">
    <property type="nucleotide sequence ID" value="NC_011312.1"/>
</dbReference>
<dbReference type="SMR" id="B6EP46"/>
<dbReference type="KEGG" id="vsa:VSAL_I0009"/>
<dbReference type="eggNOG" id="COG0593">
    <property type="taxonomic scope" value="Bacteria"/>
</dbReference>
<dbReference type="HOGENOM" id="CLU_026910_0_1_6"/>
<dbReference type="Proteomes" id="UP000001730">
    <property type="component" value="Chromosome 1"/>
</dbReference>
<dbReference type="GO" id="GO:0005737">
    <property type="term" value="C:cytoplasm"/>
    <property type="evidence" value="ECO:0007669"/>
    <property type="project" value="UniProtKB-SubCell"/>
</dbReference>
<dbReference type="GO" id="GO:0005886">
    <property type="term" value="C:plasma membrane"/>
    <property type="evidence" value="ECO:0007669"/>
    <property type="project" value="TreeGrafter"/>
</dbReference>
<dbReference type="GO" id="GO:0005524">
    <property type="term" value="F:ATP binding"/>
    <property type="evidence" value="ECO:0007669"/>
    <property type="project" value="UniProtKB-UniRule"/>
</dbReference>
<dbReference type="GO" id="GO:0016887">
    <property type="term" value="F:ATP hydrolysis activity"/>
    <property type="evidence" value="ECO:0007669"/>
    <property type="project" value="InterPro"/>
</dbReference>
<dbReference type="GO" id="GO:0003688">
    <property type="term" value="F:DNA replication origin binding"/>
    <property type="evidence" value="ECO:0007669"/>
    <property type="project" value="UniProtKB-UniRule"/>
</dbReference>
<dbReference type="GO" id="GO:0008289">
    <property type="term" value="F:lipid binding"/>
    <property type="evidence" value="ECO:0007669"/>
    <property type="project" value="UniProtKB-KW"/>
</dbReference>
<dbReference type="GO" id="GO:0006270">
    <property type="term" value="P:DNA replication initiation"/>
    <property type="evidence" value="ECO:0007669"/>
    <property type="project" value="UniProtKB-UniRule"/>
</dbReference>
<dbReference type="GO" id="GO:0006275">
    <property type="term" value="P:regulation of DNA replication"/>
    <property type="evidence" value="ECO:0007669"/>
    <property type="project" value="UniProtKB-UniRule"/>
</dbReference>
<dbReference type="CDD" id="cd00009">
    <property type="entry name" value="AAA"/>
    <property type="match status" value="1"/>
</dbReference>
<dbReference type="CDD" id="cd06571">
    <property type="entry name" value="Bac_DnaA_C"/>
    <property type="match status" value="1"/>
</dbReference>
<dbReference type="FunFam" id="1.10.1750.10:FF:000001">
    <property type="entry name" value="Chromosomal replication initiator protein DnaA"/>
    <property type="match status" value="1"/>
</dbReference>
<dbReference type="FunFam" id="1.10.8.60:FF:000003">
    <property type="entry name" value="Chromosomal replication initiator protein DnaA"/>
    <property type="match status" value="1"/>
</dbReference>
<dbReference type="FunFam" id="3.30.300.180:FF:000001">
    <property type="entry name" value="Chromosomal replication initiator protein DnaA"/>
    <property type="match status" value="1"/>
</dbReference>
<dbReference type="FunFam" id="3.40.50.300:FF:000103">
    <property type="entry name" value="Chromosomal replication initiator protein DnaA"/>
    <property type="match status" value="1"/>
</dbReference>
<dbReference type="Gene3D" id="1.10.1750.10">
    <property type="match status" value="1"/>
</dbReference>
<dbReference type="Gene3D" id="1.10.8.60">
    <property type="match status" value="1"/>
</dbReference>
<dbReference type="Gene3D" id="3.30.300.180">
    <property type="match status" value="1"/>
</dbReference>
<dbReference type="Gene3D" id="3.40.50.300">
    <property type="entry name" value="P-loop containing nucleotide triphosphate hydrolases"/>
    <property type="match status" value="1"/>
</dbReference>
<dbReference type="HAMAP" id="MF_00377">
    <property type="entry name" value="DnaA_bact"/>
    <property type="match status" value="1"/>
</dbReference>
<dbReference type="InterPro" id="IPR003593">
    <property type="entry name" value="AAA+_ATPase"/>
</dbReference>
<dbReference type="InterPro" id="IPR001957">
    <property type="entry name" value="Chromosome_initiator_DnaA"/>
</dbReference>
<dbReference type="InterPro" id="IPR020591">
    <property type="entry name" value="Chromosome_initiator_DnaA-like"/>
</dbReference>
<dbReference type="InterPro" id="IPR018312">
    <property type="entry name" value="Chromosome_initiator_DnaA_CS"/>
</dbReference>
<dbReference type="InterPro" id="IPR013159">
    <property type="entry name" value="DnaA_C"/>
</dbReference>
<dbReference type="InterPro" id="IPR013317">
    <property type="entry name" value="DnaA_dom"/>
</dbReference>
<dbReference type="InterPro" id="IPR024633">
    <property type="entry name" value="DnaA_N_dom"/>
</dbReference>
<dbReference type="InterPro" id="IPR038454">
    <property type="entry name" value="DnaA_N_sf"/>
</dbReference>
<dbReference type="InterPro" id="IPR055199">
    <property type="entry name" value="Hda_lid"/>
</dbReference>
<dbReference type="InterPro" id="IPR027417">
    <property type="entry name" value="P-loop_NTPase"/>
</dbReference>
<dbReference type="InterPro" id="IPR010921">
    <property type="entry name" value="Trp_repressor/repl_initiator"/>
</dbReference>
<dbReference type="NCBIfam" id="TIGR00362">
    <property type="entry name" value="DnaA"/>
    <property type="match status" value="1"/>
</dbReference>
<dbReference type="PANTHER" id="PTHR30050">
    <property type="entry name" value="CHROMOSOMAL REPLICATION INITIATOR PROTEIN DNAA"/>
    <property type="match status" value="1"/>
</dbReference>
<dbReference type="PANTHER" id="PTHR30050:SF2">
    <property type="entry name" value="CHROMOSOMAL REPLICATION INITIATOR PROTEIN DNAA"/>
    <property type="match status" value="1"/>
</dbReference>
<dbReference type="Pfam" id="PF00308">
    <property type="entry name" value="Bac_DnaA"/>
    <property type="match status" value="1"/>
</dbReference>
<dbReference type="Pfam" id="PF08299">
    <property type="entry name" value="Bac_DnaA_C"/>
    <property type="match status" value="1"/>
</dbReference>
<dbReference type="Pfam" id="PF11638">
    <property type="entry name" value="DnaA_N"/>
    <property type="match status" value="1"/>
</dbReference>
<dbReference type="Pfam" id="PF22688">
    <property type="entry name" value="Hda_lid"/>
    <property type="match status" value="1"/>
</dbReference>
<dbReference type="PRINTS" id="PR00051">
    <property type="entry name" value="DNAA"/>
</dbReference>
<dbReference type="SMART" id="SM00382">
    <property type="entry name" value="AAA"/>
    <property type="match status" value="1"/>
</dbReference>
<dbReference type="SMART" id="SM00760">
    <property type="entry name" value="Bac_DnaA_C"/>
    <property type="match status" value="1"/>
</dbReference>
<dbReference type="SUPFAM" id="SSF52540">
    <property type="entry name" value="P-loop containing nucleoside triphosphate hydrolases"/>
    <property type="match status" value="1"/>
</dbReference>
<dbReference type="SUPFAM" id="SSF48295">
    <property type="entry name" value="TrpR-like"/>
    <property type="match status" value="1"/>
</dbReference>
<dbReference type="PROSITE" id="PS01008">
    <property type="entry name" value="DNAA"/>
    <property type="match status" value="1"/>
</dbReference>
<proteinExistence type="inferred from homology"/>
<accession>B6EP46</accession>
<feature type="chain" id="PRO_1000121942" description="Chromosomal replication initiator protein DnaA">
    <location>
        <begin position="1"/>
        <end position="468"/>
    </location>
</feature>
<feature type="region of interest" description="Domain I, interacts with DnaA modulators" evidence="1">
    <location>
        <begin position="1"/>
        <end position="84"/>
    </location>
</feature>
<feature type="region of interest" description="Domain II" evidence="1">
    <location>
        <begin position="84"/>
        <end position="131"/>
    </location>
</feature>
<feature type="region of interest" description="Disordered" evidence="2">
    <location>
        <begin position="112"/>
        <end position="132"/>
    </location>
</feature>
<feature type="region of interest" description="Domain III, AAA+ region" evidence="1">
    <location>
        <begin position="132"/>
        <end position="348"/>
    </location>
</feature>
<feature type="region of interest" description="Domain IV, binds dsDNA" evidence="1">
    <location>
        <begin position="349"/>
        <end position="468"/>
    </location>
</feature>
<feature type="compositionally biased region" description="Basic and acidic residues" evidence="2">
    <location>
        <begin position="114"/>
        <end position="129"/>
    </location>
</feature>
<feature type="binding site" evidence="1">
    <location>
        <position position="176"/>
    </location>
    <ligand>
        <name>ATP</name>
        <dbReference type="ChEBI" id="CHEBI:30616"/>
    </ligand>
</feature>
<feature type="binding site" evidence="1">
    <location>
        <position position="178"/>
    </location>
    <ligand>
        <name>ATP</name>
        <dbReference type="ChEBI" id="CHEBI:30616"/>
    </ligand>
</feature>
<feature type="binding site" evidence="1">
    <location>
        <position position="179"/>
    </location>
    <ligand>
        <name>ATP</name>
        <dbReference type="ChEBI" id="CHEBI:30616"/>
    </ligand>
</feature>
<feature type="binding site" evidence="1">
    <location>
        <position position="180"/>
    </location>
    <ligand>
        <name>ATP</name>
        <dbReference type="ChEBI" id="CHEBI:30616"/>
    </ligand>
</feature>
<evidence type="ECO:0000255" key="1">
    <source>
        <dbReference type="HAMAP-Rule" id="MF_00377"/>
    </source>
</evidence>
<evidence type="ECO:0000256" key="2">
    <source>
        <dbReference type="SAM" id="MobiDB-lite"/>
    </source>
</evidence>
<name>DNAA_ALISL</name>
<keyword id="KW-0067">ATP-binding</keyword>
<keyword id="KW-0963">Cytoplasm</keyword>
<keyword id="KW-0235">DNA replication</keyword>
<keyword id="KW-0238">DNA-binding</keyword>
<keyword id="KW-0446">Lipid-binding</keyword>
<keyword id="KW-0547">Nucleotide-binding</keyword>
<reference key="1">
    <citation type="journal article" date="2008" name="BMC Genomics">
        <title>The genome sequence of the fish pathogen Aliivibrio salmonicida strain LFI1238 shows extensive evidence of gene decay.</title>
        <authorList>
            <person name="Hjerde E."/>
            <person name="Lorentzen M.S."/>
            <person name="Holden M.T."/>
            <person name="Seeger K."/>
            <person name="Paulsen S."/>
            <person name="Bason N."/>
            <person name="Churcher C."/>
            <person name="Harris D."/>
            <person name="Norbertczak H."/>
            <person name="Quail M.A."/>
            <person name="Sanders S."/>
            <person name="Thurston S."/>
            <person name="Parkhill J."/>
            <person name="Willassen N.P."/>
            <person name="Thomson N.R."/>
        </authorList>
    </citation>
    <scope>NUCLEOTIDE SEQUENCE [LARGE SCALE GENOMIC DNA]</scope>
    <source>
        <strain>LFI1238</strain>
    </source>
</reference>
<organism>
    <name type="scientific">Aliivibrio salmonicida (strain LFI1238)</name>
    <name type="common">Vibrio salmonicida (strain LFI1238)</name>
    <dbReference type="NCBI Taxonomy" id="316275"/>
    <lineage>
        <taxon>Bacteria</taxon>
        <taxon>Pseudomonadati</taxon>
        <taxon>Pseudomonadota</taxon>
        <taxon>Gammaproteobacteria</taxon>
        <taxon>Vibrionales</taxon>
        <taxon>Vibrionaceae</taxon>
        <taxon>Aliivibrio</taxon>
    </lineage>
</organism>
<comment type="function">
    <text evidence="1">Plays an essential role in the initiation and regulation of chromosomal replication. ATP-DnaA binds to the origin of replication (oriC) to initiate formation of the DNA replication initiation complex once per cell cycle. Binds the DnaA box (a 9 base pair repeat at the origin) and separates the double-stranded (ds)DNA. Forms a right-handed helical filament on oriC DNA; dsDNA binds to the exterior of the filament while single-stranded (ss)DNA is stabiized in the filament's interior. The ATP-DnaA-oriC complex binds and stabilizes one strand of the AT-rich DNA unwinding element (DUE), permitting loading of DNA polymerase. After initiation quickly degrades to an ADP-DnaA complex that is not apt for DNA replication. Binds acidic phospholipids.</text>
</comment>
<comment type="subunit">
    <text evidence="1">Oligomerizes as a right-handed, spiral filament on DNA at oriC.</text>
</comment>
<comment type="subcellular location">
    <subcellularLocation>
        <location evidence="1">Cytoplasm</location>
    </subcellularLocation>
</comment>
<comment type="domain">
    <text evidence="1">Domain I is involved in oligomerization and binding regulators, domain II is flexibile and of varying length in different bacteria, domain III forms the AAA+ region, while domain IV binds dsDNA.</text>
</comment>
<comment type="similarity">
    <text evidence="1">Belongs to the DnaA family.</text>
</comment>
<protein>
    <recommendedName>
        <fullName evidence="1">Chromosomal replication initiator protein DnaA</fullName>
    </recommendedName>
</protein>
<gene>
    <name evidence="1" type="primary">dnaA</name>
    <name type="ordered locus">VSAL_I0009</name>
</gene>